<proteinExistence type="evidence at protein level"/>
<gene>
    <name evidence="5" type="primary">TMEM186</name>
    <name type="synonym">C16orf51</name>
</gene>
<organism>
    <name type="scientific">Homo sapiens</name>
    <name type="common">Human</name>
    <dbReference type="NCBI Taxonomy" id="9606"/>
    <lineage>
        <taxon>Eukaryota</taxon>
        <taxon>Metazoa</taxon>
        <taxon>Chordata</taxon>
        <taxon>Craniata</taxon>
        <taxon>Vertebrata</taxon>
        <taxon>Euteleostomi</taxon>
        <taxon>Mammalia</taxon>
        <taxon>Eutheria</taxon>
        <taxon>Euarchontoglires</taxon>
        <taxon>Primates</taxon>
        <taxon>Haplorrhini</taxon>
        <taxon>Catarrhini</taxon>
        <taxon>Hominidae</taxon>
        <taxon>Homo</taxon>
    </lineage>
</organism>
<reference key="1">
    <citation type="journal article" date="2001" name="Genome Res.">
        <title>Towards a catalog of human genes and proteins: sequencing and analysis of 500 novel complete protein coding human cDNAs.</title>
        <authorList>
            <person name="Wiemann S."/>
            <person name="Weil B."/>
            <person name="Wellenreuther R."/>
            <person name="Gassenhuber J."/>
            <person name="Glassl S."/>
            <person name="Ansorge W."/>
            <person name="Boecher M."/>
            <person name="Bloecker H."/>
            <person name="Bauersachs S."/>
            <person name="Blum H."/>
            <person name="Lauber J."/>
            <person name="Duesterhoeft A."/>
            <person name="Beyer A."/>
            <person name="Koehrer K."/>
            <person name="Strack N."/>
            <person name="Mewes H.-W."/>
            <person name="Ottenwaelder B."/>
            <person name="Obermaier B."/>
            <person name="Tampe J."/>
            <person name="Heubner D."/>
            <person name="Wambutt R."/>
            <person name="Korn B."/>
            <person name="Klein M."/>
            <person name="Poustka A."/>
        </authorList>
    </citation>
    <scope>NUCLEOTIDE SEQUENCE [LARGE SCALE MRNA]</scope>
    <source>
        <tissue>Brain</tissue>
    </source>
</reference>
<reference key="2">
    <citation type="journal article" date="2004" name="Nat. Genet.">
        <title>Complete sequencing and characterization of 21,243 full-length human cDNAs.</title>
        <authorList>
            <person name="Ota T."/>
            <person name="Suzuki Y."/>
            <person name="Nishikawa T."/>
            <person name="Otsuki T."/>
            <person name="Sugiyama T."/>
            <person name="Irie R."/>
            <person name="Wakamatsu A."/>
            <person name="Hayashi K."/>
            <person name="Sato H."/>
            <person name="Nagai K."/>
            <person name="Kimura K."/>
            <person name="Makita H."/>
            <person name="Sekine M."/>
            <person name="Obayashi M."/>
            <person name="Nishi T."/>
            <person name="Shibahara T."/>
            <person name="Tanaka T."/>
            <person name="Ishii S."/>
            <person name="Yamamoto J."/>
            <person name="Saito K."/>
            <person name="Kawai Y."/>
            <person name="Isono Y."/>
            <person name="Nakamura Y."/>
            <person name="Nagahari K."/>
            <person name="Murakami K."/>
            <person name="Yasuda T."/>
            <person name="Iwayanagi T."/>
            <person name="Wagatsuma M."/>
            <person name="Shiratori A."/>
            <person name="Sudo H."/>
            <person name="Hosoiri T."/>
            <person name="Kaku Y."/>
            <person name="Kodaira H."/>
            <person name="Kondo H."/>
            <person name="Sugawara M."/>
            <person name="Takahashi M."/>
            <person name="Kanda K."/>
            <person name="Yokoi T."/>
            <person name="Furuya T."/>
            <person name="Kikkawa E."/>
            <person name="Omura Y."/>
            <person name="Abe K."/>
            <person name="Kamihara K."/>
            <person name="Katsuta N."/>
            <person name="Sato K."/>
            <person name="Tanikawa M."/>
            <person name="Yamazaki M."/>
            <person name="Ninomiya K."/>
            <person name="Ishibashi T."/>
            <person name="Yamashita H."/>
            <person name="Murakawa K."/>
            <person name="Fujimori K."/>
            <person name="Tanai H."/>
            <person name="Kimata M."/>
            <person name="Watanabe M."/>
            <person name="Hiraoka S."/>
            <person name="Chiba Y."/>
            <person name="Ishida S."/>
            <person name="Ono Y."/>
            <person name="Takiguchi S."/>
            <person name="Watanabe S."/>
            <person name="Yosida M."/>
            <person name="Hotuta T."/>
            <person name="Kusano J."/>
            <person name="Kanehori K."/>
            <person name="Takahashi-Fujii A."/>
            <person name="Hara H."/>
            <person name="Tanase T.-O."/>
            <person name="Nomura Y."/>
            <person name="Togiya S."/>
            <person name="Komai F."/>
            <person name="Hara R."/>
            <person name="Takeuchi K."/>
            <person name="Arita M."/>
            <person name="Imose N."/>
            <person name="Musashino K."/>
            <person name="Yuuki H."/>
            <person name="Oshima A."/>
            <person name="Sasaki N."/>
            <person name="Aotsuka S."/>
            <person name="Yoshikawa Y."/>
            <person name="Matsunawa H."/>
            <person name="Ichihara T."/>
            <person name="Shiohata N."/>
            <person name="Sano S."/>
            <person name="Moriya S."/>
            <person name="Momiyama H."/>
            <person name="Satoh N."/>
            <person name="Takami S."/>
            <person name="Terashima Y."/>
            <person name="Suzuki O."/>
            <person name="Nakagawa S."/>
            <person name="Senoh A."/>
            <person name="Mizoguchi H."/>
            <person name="Goto Y."/>
            <person name="Shimizu F."/>
            <person name="Wakebe H."/>
            <person name="Hishigaki H."/>
            <person name="Watanabe T."/>
            <person name="Sugiyama A."/>
            <person name="Takemoto M."/>
            <person name="Kawakami B."/>
            <person name="Yamazaki M."/>
            <person name="Watanabe K."/>
            <person name="Kumagai A."/>
            <person name="Itakura S."/>
            <person name="Fukuzumi Y."/>
            <person name="Fujimori Y."/>
            <person name="Komiyama M."/>
            <person name="Tashiro H."/>
            <person name="Tanigami A."/>
            <person name="Fujiwara T."/>
            <person name="Ono T."/>
            <person name="Yamada K."/>
            <person name="Fujii Y."/>
            <person name="Ozaki K."/>
            <person name="Hirao M."/>
            <person name="Ohmori Y."/>
            <person name="Kawabata A."/>
            <person name="Hikiji T."/>
            <person name="Kobatake N."/>
            <person name="Inagaki H."/>
            <person name="Ikema Y."/>
            <person name="Okamoto S."/>
            <person name="Okitani R."/>
            <person name="Kawakami T."/>
            <person name="Noguchi S."/>
            <person name="Itoh T."/>
            <person name="Shigeta K."/>
            <person name="Senba T."/>
            <person name="Matsumura K."/>
            <person name="Nakajima Y."/>
            <person name="Mizuno T."/>
            <person name="Morinaga M."/>
            <person name="Sasaki M."/>
            <person name="Togashi T."/>
            <person name="Oyama M."/>
            <person name="Hata H."/>
            <person name="Watanabe M."/>
            <person name="Komatsu T."/>
            <person name="Mizushima-Sugano J."/>
            <person name="Satoh T."/>
            <person name="Shirai Y."/>
            <person name="Takahashi Y."/>
            <person name="Nakagawa K."/>
            <person name="Okumura K."/>
            <person name="Nagase T."/>
            <person name="Nomura N."/>
            <person name="Kikuchi H."/>
            <person name="Masuho Y."/>
            <person name="Yamashita R."/>
            <person name="Nakai K."/>
            <person name="Yada T."/>
            <person name="Nakamura Y."/>
            <person name="Ohara O."/>
            <person name="Isogai T."/>
            <person name="Sugano S."/>
        </authorList>
    </citation>
    <scope>NUCLEOTIDE SEQUENCE [LARGE SCALE MRNA]</scope>
    <source>
        <tissue>Brain</tissue>
    </source>
</reference>
<reference key="3">
    <citation type="submission" date="2005-09" db="EMBL/GenBank/DDBJ databases">
        <authorList>
            <person name="Mural R.J."/>
            <person name="Istrail S."/>
            <person name="Sutton G.G."/>
            <person name="Florea L."/>
            <person name="Halpern A.L."/>
            <person name="Mobarry C.M."/>
            <person name="Lippert R."/>
            <person name="Walenz B."/>
            <person name="Shatkay H."/>
            <person name="Dew I."/>
            <person name="Miller J.R."/>
            <person name="Flanigan M.J."/>
            <person name="Edwards N.J."/>
            <person name="Bolanos R."/>
            <person name="Fasulo D."/>
            <person name="Halldorsson B.V."/>
            <person name="Hannenhalli S."/>
            <person name="Turner R."/>
            <person name="Yooseph S."/>
            <person name="Lu F."/>
            <person name="Nusskern D.R."/>
            <person name="Shue B.C."/>
            <person name="Zheng X.H."/>
            <person name="Zhong F."/>
            <person name="Delcher A.L."/>
            <person name="Huson D.H."/>
            <person name="Kravitz S.A."/>
            <person name="Mouchard L."/>
            <person name="Reinert K."/>
            <person name="Remington K.A."/>
            <person name="Clark A.G."/>
            <person name="Waterman M.S."/>
            <person name="Eichler E.E."/>
            <person name="Adams M.D."/>
            <person name="Hunkapiller M.W."/>
            <person name="Myers E.W."/>
            <person name="Venter J.C."/>
        </authorList>
    </citation>
    <scope>NUCLEOTIDE SEQUENCE [LARGE SCALE GENOMIC DNA]</scope>
</reference>
<reference key="4">
    <citation type="journal article" date="2004" name="Genome Res.">
        <title>The status, quality, and expansion of the NIH full-length cDNA project: the Mammalian Gene Collection (MGC).</title>
        <authorList>
            <consortium name="The MGC Project Team"/>
        </authorList>
    </citation>
    <scope>NUCLEOTIDE SEQUENCE [LARGE SCALE MRNA]</scope>
    <source>
        <tissue>Uterus</tissue>
    </source>
</reference>
<reference key="5">
    <citation type="journal article" date="2020" name="Biochim. Biophys. Acta">
        <title>TMEM70 functions in the assembly of complexes I and V.</title>
        <authorList>
            <person name="Sanchez-Caballero L."/>
            <person name="Elurbe D.M."/>
            <person name="Baertling F."/>
            <person name="Guerrero-Castillo S."/>
            <person name="van den Brand M."/>
            <person name="van Strien J."/>
            <person name="van Dam T.J.P."/>
            <person name="Rodenburg R."/>
            <person name="Brandt U."/>
            <person name="Huynen M.A."/>
            <person name="Nijtmans L.G.J."/>
        </authorList>
    </citation>
    <scope>SUBCELLULAR LOCATION</scope>
</reference>
<reference key="6">
    <citation type="journal article" date="2020" name="Cell Rep.">
        <title>Dissecting the Roles of Mitochondrial Complex I Intermediate Assembly Complex Factors in the Biogenesis of Complex I.</title>
        <authorList>
            <person name="Formosa L.E."/>
            <person name="Muellner-Wong L."/>
            <person name="Reljic B."/>
            <person name="Sharpe A.J."/>
            <person name="Jackson T.D."/>
            <person name="Beilharz T.H."/>
            <person name="Stojanovski D."/>
            <person name="Lazarou M."/>
            <person name="Stroud D.A."/>
            <person name="Ryan M.T."/>
        </authorList>
    </citation>
    <scope>SUBCELLULAR LOCATION</scope>
    <scope>TOPOLOGY</scope>
    <scope>IDENTIFICATION IN THE MCIA COMPLEX</scope>
    <scope>FUNCTION</scope>
    <scope>INTERACTION WITH MT-ND3</scope>
</reference>
<name>TM186_HUMAN</name>
<comment type="function">
    <text evidence="2">As part of the MCIA complex, required for efficient assembly of the mitochondrial complex I.</text>
</comment>
<comment type="subunit">
    <text evidence="2">Part of the mitochondrial complex I assembly/MCIA complex that comprises at least the core subunits TMEM126B, NDUFAF1, ECSIT and ACAD9 and complement subunits such as COA1 and TMEM186 (PubMed:32320651). Interacts with MT-ND3 (PubMed:32320651).</text>
</comment>
<comment type="interaction">
    <interactant intactId="EBI-9089409">
        <id>Q96B77</id>
    </interactant>
    <interactant intactId="EBI-348399">
        <id>P22607</id>
        <label>FGFR3</label>
    </interactant>
    <organismsDiffer>false</organismsDiffer>
    <experiments>3</experiments>
</comment>
<comment type="interaction">
    <interactant intactId="EBI-9089409">
        <id>Q96B77</id>
    </interactant>
    <interactant intactId="EBI-744302">
        <id>P14136</id>
        <label>GFAP</label>
    </interactant>
    <organismsDiffer>false</organismsDiffer>
    <experiments>3</experiments>
</comment>
<comment type="interaction">
    <interactant intactId="EBI-9089409">
        <id>Q96B77</id>
    </interactant>
    <interactant intactId="EBI-1055254">
        <id>Q8WXH2</id>
        <label>JPH3</label>
    </interactant>
    <organismsDiffer>false</organismsDiffer>
    <experiments>3</experiments>
</comment>
<comment type="interaction">
    <interactant intactId="EBI-9089409">
        <id>Q96B77</id>
    </interactant>
    <interactant intactId="EBI-741480">
        <id>Q9UMX0</id>
        <label>UBQLN1</label>
    </interactant>
    <organismsDiffer>false</organismsDiffer>
    <experiments>3</experiments>
</comment>
<comment type="interaction">
    <interactant intactId="EBI-9089409">
        <id>Q96B77</id>
    </interactant>
    <interactant intactId="EBI-25900580">
        <id>Q9Y649</id>
    </interactant>
    <organismsDiffer>false</organismsDiffer>
    <experiments>3</experiments>
</comment>
<comment type="subcellular location">
    <subcellularLocation>
        <location evidence="2 4">Mitochondrion inner membrane</location>
        <topology evidence="3">Multi-pass membrane protein</topology>
    </subcellularLocation>
</comment>
<comment type="similarity">
    <text evidence="3">Belongs to the TMEM186 family.</text>
</comment>
<protein>
    <recommendedName>
        <fullName evidence="3">Transmembrane protein 186</fullName>
    </recommendedName>
</protein>
<keyword id="KW-0472">Membrane</keyword>
<keyword id="KW-0496">Mitochondrion</keyword>
<keyword id="KW-0999">Mitochondrion inner membrane</keyword>
<keyword id="KW-1267">Proteomics identification</keyword>
<keyword id="KW-1185">Reference proteome</keyword>
<keyword id="KW-0812">Transmembrane</keyword>
<keyword id="KW-1133">Transmembrane helix</keyword>
<evidence type="ECO:0000255" key="1"/>
<evidence type="ECO:0000269" key="2">
    <source>
    </source>
</evidence>
<evidence type="ECO:0000305" key="3"/>
<evidence type="ECO:0000305" key="4">
    <source>
    </source>
</evidence>
<evidence type="ECO:0000312" key="5">
    <source>
        <dbReference type="HGNC" id="HGNC:24530"/>
    </source>
</evidence>
<dbReference type="EMBL" id="AL080088">
    <property type="protein sequence ID" value="CAB45703.2"/>
    <property type="molecule type" value="mRNA"/>
</dbReference>
<dbReference type="EMBL" id="AK314404">
    <property type="protein sequence ID" value="BAG37027.1"/>
    <property type="molecule type" value="mRNA"/>
</dbReference>
<dbReference type="EMBL" id="CH471112">
    <property type="protein sequence ID" value="EAW85205.1"/>
    <property type="molecule type" value="Genomic_DNA"/>
</dbReference>
<dbReference type="EMBL" id="BC015912">
    <property type="protein sequence ID" value="AAH15912.1"/>
    <property type="molecule type" value="mRNA"/>
</dbReference>
<dbReference type="CCDS" id="CCDS10535.1"/>
<dbReference type="PIR" id="T12474">
    <property type="entry name" value="T12474"/>
</dbReference>
<dbReference type="RefSeq" id="NP_056236.2">
    <property type="nucleotide sequence ID" value="NM_015421.4"/>
</dbReference>
<dbReference type="BioGRID" id="117394">
    <property type="interactions" value="74"/>
</dbReference>
<dbReference type="ComplexPortal" id="CPX-6322">
    <property type="entry name" value="Mitochondrial complex I intermediate assembly (MCIA) complex"/>
</dbReference>
<dbReference type="FunCoup" id="Q96B77">
    <property type="interactions" value="2483"/>
</dbReference>
<dbReference type="IntAct" id="Q96B77">
    <property type="interactions" value="70"/>
</dbReference>
<dbReference type="MINT" id="Q96B77"/>
<dbReference type="STRING" id="9606.ENSP00000331640"/>
<dbReference type="iPTMnet" id="Q96B77"/>
<dbReference type="PhosphoSitePlus" id="Q96B77"/>
<dbReference type="BioMuta" id="TMEM186"/>
<dbReference type="DMDM" id="74731207"/>
<dbReference type="jPOST" id="Q96B77"/>
<dbReference type="MassIVE" id="Q96B77"/>
<dbReference type="PaxDb" id="9606-ENSP00000331640"/>
<dbReference type="PeptideAtlas" id="Q96B77"/>
<dbReference type="ProteomicsDB" id="76053"/>
<dbReference type="Pumba" id="Q96B77"/>
<dbReference type="Antibodypedia" id="3062">
    <property type="antibodies" value="40 antibodies from 10 providers"/>
</dbReference>
<dbReference type="DNASU" id="25880"/>
<dbReference type="Ensembl" id="ENST00000333050.7">
    <property type="protein sequence ID" value="ENSP00000331640.6"/>
    <property type="gene ID" value="ENSG00000184857.8"/>
</dbReference>
<dbReference type="GeneID" id="25880"/>
<dbReference type="KEGG" id="hsa:25880"/>
<dbReference type="MANE-Select" id="ENST00000333050.7">
    <property type="protein sequence ID" value="ENSP00000331640.6"/>
    <property type="RefSeq nucleotide sequence ID" value="NM_015421.4"/>
    <property type="RefSeq protein sequence ID" value="NP_056236.2"/>
</dbReference>
<dbReference type="UCSC" id="uc002cze.3">
    <property type="organism name" value="human"/>
</dbReference>
<dbReference type="AGR" id="HGNC:24530"/>
<dbReference type="CTD" id="25880"/>
<dbReference type="GeneCards" id="TMEM186"/>
<dbReference type="HGNC" id="HGNC:24530">
    <property type="gene designation" value="TMEM186"/>
</dbReference>
<dbReference type="HPA" id="ENSG00000184857">
    <property type="expression patterns" value="Low tissue specificity"/>
</dbReference>
<dbReference type="MalaCards" id="TMEM186"/>
<dbReference type="MIM" id="620433">
    <property type="type" value="gene"/>
</dbReference>
<dbReference type="neXtProt" id="NX_Q96B77"/>
<dbReference type="OpenTargets" id="ENSG00000184857"/>
<dbReference type="PharmGKB" id="PA162406190"/>
<dbReference type="VEuPathDB" id="HostDB:ENSG00000184857"/>
<dbReference type="eggNOG" id="ENOG502S11D">
    <property type="taxonomic scope" value="Eukaryota"/>
</dbReference>
<dbReference type="GeneTree" id="ENSGT00390000000087"/>
<dbReference type="HOGENOM" id="CLU_104872_1_0_1"/>
<dbReference type="InParanoid" id="Q96B77"/>
<dbReference type="OMA" id="MTIGDTG"/>
<dbReference type="OrthoDB" id="6147888at2759"/>
<dbReference type="PAN-GO" id="Q96B77">
    <property type="GO annotations" value="1 GO annotation based on evolutionary models"/>
</dbReference>
<dbReference type="PhylomeDB" id="Q96B77"/>
<dbReference type="TreeFam" id="TF326623"/>
<dbReference type="PathwayCommons" id="Q96B77"/>
<dbReference type="Reactome" id="R-HSA-611105">
    <property type="pathway name" value="Respiratory electron transport"/>
</dbReference>
<dbReference type="Reactome" id="R-HSA-6799198">
    <property type="pathway name" value="Complex I biogenesis"/>
</dbReference>
<dbReference type="SignaLink" id="Q96B77"/>
<dbReference type="BioGRID-ORCS" id="25880">
    <property type="hits" value="11 hits in 1160 CRISPR screens"/>
</dbReference>
<dbReference type="GenomeRNAi" id="25880"/>
<dbReference type="Pharos" id="Q96B77">
    <property type="development level" value="Tdark"/>
</dbReference>
<dbReference type="PRO" id="PR:Q96B77"/>
<dbReference type="Proteomes" id="UP000005640">
    <property type="component" value="Chromosome 16"/>
</dbReference>
<dbReference type="RNAct" id="Q96B77">
    <property type="molecule type" value="protein"/>
</dbReference>
<dbReference type="Bgee" id="ENSG00000184857">
    <property type="expression patterns" value="Expressed in cervix squamous epithelium and 200 other cell types or tissues"/>
</dbReference>
<dbReference type="GO" id="GO:0005743">
    <property type="term" value="C:mitochondrial inner membrane"/>
    <property type="evidence" value="ECO:0000304"/>
    <property type="project" value="Reactome"/>
</dbReference>
<dbReference type="GO" id="GO:0005739">
    <property type="term" value="C:mitochondrion"/>
    <property type="evidence" value="ECO:0000314"/>
    <property type="project" value="UniProtKB"/>
</dbReference>
<dbReference type="GO" id="GO:0032981">
    <property type="term" value="P:mitochondrial respiratory chain complex I assembly"/>
    <property type="evidence" value="ECO:0000315"/>
    <property type="project" value="UniProtKB"/>
</dbReference>
<dbReference type="InterPro" id="IPR026571">
    <property type="entry name" value="Tmem186"/>
</dbReference>
<dbReference type="InterPro" id="IPR045325">
    <property type="entry name" value="TMEM70/TMEM186/TMEM223"/>
</dbReference>
<dbReference type="PANTHER" id="PTHR13603">
    <property type="entry name" value="TRANSMEMBRANE PROTEIN 186"/>
    <property type="match status" value="1"/>
</dbReference>
<dbReference type="PANTHER" id="PTHR13603:SF1">
    <property type="entry name" value="TRANSMEMBRANE PROTEIN 186"/>
    <property type="match status" value="1"/>
</dbReference>
<dbReference type="Pfam" id="PF06979">
    <property type="entry name" value="TMEM70"/>
    <property type="match status" value="1"/>
</dbReference>
<accession>Q96B77</accession>
<accession>B2RAY0</accession>
<accession>Q9Y4T4</accession>
<sequence>MAALLRAVRRFRGKAVWERPLHGLWCCSGQEDPKRWVGSSSPISKEKLPNAETEKFWMFYRFDAIRTFGFLSRLKLAQTALTVVALPPGYYLYSQGLLTLNTVCLMSGISGFALTMLCWMSYFLRRLVGILYLNESGTMLRVAHLNFWGWRQDTYCPMADVIPLTETKDRPQEMFVRIQRYSGKQTFYVTLRYGRILDRERFTQVFGVHQMLK</sequence>
<feature type="chain" id="PRO_0000279439" description="Transmembrane protein 186">
    <location>
        <begin position="1"/>
        <end position="213"/>
    </location>
</feature>
<feature type="topological domain" description="Mitochondrial matrix" evidence="3">
    <location>
        <begin position="1"/>
        <end position="79"/>
    </location>
</feature>
<feature type="transmembrane region" description="Helical" evidence="1">
    <location>
        <begin position="80"/>
        <end position="100"/>
    </location>
</feature>
<feature type="topological domain" description="Mitochondrial intermembrane" evidence="3">
    <location>
        <begin position="101"/>
        <end position="102"/>
    </location>
</feature>
<feature type="transmembrane region" description="Helical" evidence="1">
    <location>
        <begin position="103"/>
        <end position="123"/>
    </location>
</feature>
<feature type="topological domain" description="Mitochondrial matrix" evidence="3">
    <location>
        <begin position="124"/>
        <end position="213"/>
    </location>
</feature>
<feature type="sequence conflict" description="In Ref. 1; CAB45703." evidence="3" ref="1">
    <original>R</original>
    <variation>G</variation>
    <location>
        <position position="19"/>
    </location>
</feature>